<accession>Q1HVJ0</accession>
<evidence type="ECO:0000250" key="1">
    <source>
        <dbReference type="UniProtKB" id="P03179"/>
    </source>
</evidence>
<evidence type="ECO:0000269" key="2">
    <source>
    </source>
</evidence>
<evidence type="ECO:0000305" key="3"/>
<evidence type="ECO:0007744" key="4">
    <source>
        <dbReference type="PDB" id="5KDM"/>
    </source>
</evidence>
<evidence type="ECO:0007829" key="5">
    <source>
        <dbReference type="PDB" id="5KDM"/>
    </source>
</evidence>
<keyword id="KW-0002">3D-structure</keyword>
<keyword id="KW-1048">Host nucleus</keyword>
<keyword id="KW-0945">Host-virus interaction</keyword>
<keyword id="KW-0426">Late protein</keyword>
<keyword id="KW-1185">Reference proteome</keyword>
<keyword id="KW-0946">Virion</keyword>
<keyword id="KW-0920">Virion tegument</keyword>
<dbReference type="EMBL" id="DQ279927">
    <property type="protein sequence ID" value="ABB89216.1"/>
    <property type="molecule type" value="Genomic_DNA"/>
</dbReference>
<dbReference type="RefSeq" id="YP_001129438.1">
    <property type="nucleotide sequence ID" value="NC_009334.1"/>
</dbReference>
<dbReference type="PDB" id="5KDM">
    <property type="method" value="X-ray"/>
    <property type="resolution" value="3.50 A"/>
    <property type="chains" value="D=381-599"/>
</dbReference>
<dbReference type="PDBsum" id="5KDM"/>
<dbReference type="SMR" id="Q1HVJ0"/>
<dbReference type="KEGG" id="vg:5176185"/>
<dbReference type="Proteomes" id="UP000007639">
    <property type="component" value="Genome"/>
</dbReference>
<dbReference type="GO" id="GO:0043657">
    <property type="term" value="C:host cell"/>
    <property type="evidence" value="ECO:0007669"/>
    <property type="project" value="GOC"/>
</dbReference>
<dbReference type="GO" id="GO:0042025">
    <property type="term" value="C:host cell nucleus"/>
    <property type="evidence" value="ECO:0007669"/>
    <property type="project" value="UniProtKB-SubCell"/>
</dbReference>
<dbReference type="GO" id="GO:0019033">
    <property type="term" value="C:viral tegument"/>
    <property type="evidence" value="ECO:0007669"/>
    <property type="project" value="UniProtKB-SubCell"/>
</dbReference>
<dbReference type="GO" id="GO:0004642">
    <property type="term" value="F:phosphoribosylformylglycinamidine synthase activity"/>
    <property type="evidence" value="ECO:0007669"/>
    <property type="project" value="TreeGrafter"/>
</dbReference>
<dbReference type="GO" id="GO:0075733">
    <property type="term" value="P:intracellular transport of virus"/>
    <property type="evidence" value="ECO:0007669"/>
    <property type="project" value="InterPro"/>
</dbReference>
<dbReference type="GO" id="GO:0006164">
    <property type="term" value="P:purine nucleotide biosynthetic process"/>
    <property type="evidence" value="ECO:0007669"/>
    <property type="project" value="TreeGrafter"/>
</dbReference>
<dbReference type="Gene3D" id="3.40.50.880">
    <property type="match status" value="1"/>
</dbReference>
<dbReference type="Gene3D" id="3.90.650.10">
    <property type="entry name" value="PurM-like C-terminal domain"/>
    <property type="match status" value="1"/>
</dbReference>
<dbReference type="Gene3D" id="3.30.1330.10">
    <property type="entry name" value="PurM-like, N-terminal domain"/>
    <property type="match status" value="1"/>
</dbReference>
<dbReference type="InterPro" id="IPR029062">
    <property type="entry name" value="Class_I_gatase-like"/>
</dbReference>
<dbReference type="InterPro" id="IPR010077">
    <property type="entry name" value="Herpes_virus_tegument"/>
</dbReference>
<dbReference type="InterPro" id="IPR010918">
    <property type="entry name" value="PurM-like_C_dom"/>
</dbReference>
<dbReference type="InterPro" id="IPR036676">
    <property type="entry name" value="PurM-like_C_sf"/>
</dbReference>
<dbReference type="InterPro" id="IPR036921">
    <property type="entry name" value="PurM-like_N_sf"/>
</dbReference>
<dbReference type="InterPro" id="IPR024346">
    <property type="entry name" value="Tegument_herpes_virus_N"/>
</dbReference>
<dbReference type="NCBIfam" id="TIGR01739">
    <property type="entry name" value="tegu_FGAM_synt"/>
    <property type="match status" value="1"/>
</dbReference>
<dbReference type="PANTHER" id="PTHR10099">
    <property type="entry name" value="PHOSPHORIBOSYLFORMYLGLYCINAMIDINE SYNTHASE"/>
    <property type="match status" value="1"/>
</dbReference>
<dbReference type="PANTHER" id="PTHR10099:SF1">
    <property type="entry name" value="PHOSPHORIBOSYLFORMYLGLYCINAMIDINE SYNTHASE"/>
    <property type="match status" value="1"/>
</dbReference>
<dbReference type="Pfam" id="PF02769">
    <property type="entry name" value="AIRS_C"/>
    <property type="match status" value="1"/>
</dbReference>
<dbReference type="Pfam" id="PF13507">
    <property type="entry name" value="GATase_5"/>
    <property type="match status" value="1"/>
</dbReference>
<dbReference type="Pfam" id="PF12818">
    <property type="entry name" value="Tegument_dsDNA"/>
    <property type="match status" value="1"/>
</dbReference>
<dbReference type="SMART" id="SM01211">
    <property type="entry name" value="GATase_5"/>
    <property type="match status" value="1"/>
</dbReference>
<dbReference type="SUPFAM" id="SSF52317">
    <property type="entry name" value="Class I glutamine amidotransferase-like"/>
    <property type="match status" value="1"/>
</dbReference>
<dbReference type="SUPFAM" id="SSF56042">
    <property type="entry name" value="PurM C-terminal domain-like"/>
    <property type="match status" value="1"/>
</dbReference>
<dbReference type="SUPFAM" id="SSF55326">
    <property type="entry name" value="PurM N-terminal domain-like"/>
    <property type="match status" value="1"/>
</dbReference>
<gene>
    <name type="ORF">BNRF1</name>
</gene>
<sequence>MEDRGRETQMPVARYGGPFIMVRLFGQDGEANIQEQRLYELLSDPRSALGLDPGPLIAENLLLVALRGTNNDPRPQRQERARELALVGILLGNGEQGEHLGTESALEASGNNYVYAYGPDWMARPSTWSAEIQQFLRLLGATYVLRVEMGRQFGFEVHRSRPSFRQFQAINHLVLFDNALRKYDSGQVAAGFQRALLVAGPETADTRPDLRKLNEWVFGGRAAGGRQLADELKIVSALRDTYSGHLVLQPTETLDTWKVLSRDTRTAHSLEHGFIHAAGTIQANCPQLFMRRQHPGLFPFVSAIASSLGWYYQTATGPGADARAAARRQQAFQTRAAAECHAKSGVPVVAGFYRTINATLKGGEGLQPTMFNGELGAIKHQALDTVRYDYGHYLIMLGPFQPWSGLTAPPCPYAESSWAQAAVQTALELFSALYPAPCISGYARPPGPSAVIEHLGSLVPKGGLLLFLSHLPDDVKDGLGEMGPARATGPGMQQFVSSYFLNPACSNVFITVRQRGEKINGRTVLQALGRACDMAGCQHYVLGSTVPLGGLNFVNDLASPVSTAEMMDDFSPFFTVEFPPIQEEGARSPVPLDVDESMDISPSYELPWLSLESCLTSILSHPTVGSKEHLVRHTDRVSGGRVAQQPGVGPLDLPLADYAFVAHSQVWTRPGGAPPLPYRTWDRMTEKLLVSAKPGGENVKVSGTVITLGEQGYKVSLDLREGTRLAMAEALLNAAFAPILDPEDVLLTLHLHLDPRRADNSVVMEAMTAASDYARGLGVKLTFGSASCPETGSSASSFMTVVASVSAPGEFSGPLITPVLQKTGSLLIAVRCGDGKIQGGSLFEQLFSDVATTPRAPEALSLKNLFRAVQQLVKSGIVLSGHDISDGGLVTCLVEMALAGQRGVTITMPVASDYLPEMFAEHPGLVFEVEERSVGEVLQTLRSMNMYPAVLGRVGEQGPDQMFEVQHGPETVLRQSLRLLLGTWSSFASEQYECLRPDRINRSMHVSDYGYNEALAVSPLTGKNLSPRRLVTEPDPRCQVAVLCAPGTRGHESLLAAFTNAGCLCRRVFFREVRDNTFLDKYVGLAIGGVHGARDSALAGRATVALINRSPALRDAILKFLNRPDTFSVALGELGVQVLAGLGAVGSTDNPPAPGVEVNVQRSPLILAPNASGMFESRWLNISIPATTSSVMLRGLRGCVLPCWVQGSCLGLQFTNLGMPYVLQNAHQIACHFHSNGTDAWRFAMNYPRNPTEQGNIAGLCSRDGRHLALLCDPSLCTDFWQWEHIPPAFGHPTGCSPWTLMFQAAHLWSLRHGRPSE</sequence>
<name>MTP_EBVA8</name>
<comment type="function">
    <text evidence="1">Tegument protein that plays a role in the inhibition of host intrinsic defenses to promote viral early gene activation. Interacts with host DAXX and thereby disrupts the complex between DAXX and ATRX. Suppresses the DAXX-ATRX dependent deposition of histone H3.3 on viral chromatin allowing viral transcription. Targets also host SMC5/6 for proteasomal degradation in a CUL7 and calpain-dependent manner to support nuclear membrane-less replication compartment formation and lytic virus replication.</text>
</comment>
<comment type="subunit">
    <text evidence="1 2">Interacts with host DAXX; this interaction disrupts the chromatin remodeling complex ATRX:DAXX and thus allows viral transcription (PubMed:27581705). Interacts with host SMC6; this interaction targets SMC5-SMC6 complex for proteasomal degradation.</text>
</comment>
<comment type="subcellular location">
    <subcellularLocation>
        <location evidence="1">Virion tegument</location>
    </subcellularLocation>
    <subcellularLocation>
        <location evidence="2">Host nucleus</location>
    </subcellularLocation>
    <text evidence="1 2">Colocalizes with host DAXX at PML nuclear bodies (PubMed:27581705).</text>
</comment>
<comment type="similarity">
    <text evidence="3">Belongs to the herpesviridae MTP family.</text>
</comment>
<comment type="caution">
    <text evidence="3">Controvertial experiments have localized MTP at the virion surface.</text>
</comment>
<reference key="1">
    <citation type="journal article" date="2006" name="Virology">
        <title>The genome of Epstein-Barr virus type 2 strain AG876.</title>
        <authorList>
            <person name="Dolan A."/>
            <person name="Addison C."/>
            <person name="Gatherer D."/>
            <person name="Davison A.J."/>
            <person name="McGeoch D.J."/>
        </authorList>
    </citation>
    <scope>NUCLEOTIDE SEQUENCE [LARGE SCALE GENOMIC DNA]</scope>
</reference>
<reference evidence="4" key="2">
    <citation type="journal article" date="2016" name="Nat. Commun.">
        <title>Structural basis underlying viral hijacking of a histone chaperone complex.</title>
        <authorList>
            <person name="Huang H."/>
            <person name="Deng Z."/>
            <person name="Vladimirova O."/>
            <person name="Wiedmer A."/>
            <person name="Lu F."/>
            <person name="Lieberman P.M."/>
            <person name="Patel D.J."/>
        </authorList>
    </citation>
    <scope>X-RAY CRYSTALLOGRAPHY (3.50 ANGSTROMS) OF 381-599</scope>
    <scope>INTERACTION WITH HOST DAXX</scope>
    <scope>SUBCELLULAR LOCATION</scope>
    <scope>MUTAGENESIS OF TYR-390 AND LYS-461</scope>
</reference>
<protein>
    <recommendedName>
        <fullName>Major tegument protein</fullName>
        <shortName>MTP</shortName>
    </recommendedName>
    <alternativeName>
        <fullName>Protein p140</fullName>
    </alternativeName>
</protein>
<feature type="chain" id="PRO_0000382437" description="Major tegument protein">
    <location>
        <begin position="1"/>
        <end position="1318"/>
    </location>
</feature>
<feature type="mutagenesis site" description="About 90% loss of co-localization with host DAXX in PML bodies." evidence="2">
    <original>Y</original>
    <variation>A</variation>
    <location>
        <position position="390"/>
    </location>
</feature>
<feature type="mutagenesis site" description="About 50% loss of co-localization with host DAXX in PML bodies." evidence="2">
    <original>K</original>
    <variation>A</variation>
    <location>
        <position position="461"/>
    </location>
</feature>
<feature type="strand" evidence="5">
    <location>
        <begin position="393"/>
        <end position="398"/>
    </location>
</feature>
<feature type="helix" evidence="5">
    <location>
        <begin position="415"/>
        <end position="433"/>
    </location>
</feature>
<feature type="strand" evidence="5">
    <location>
        <begin position="446"/>
        <end position="448"/>
    </location>
</feature>
<feature type="helix" evidence="5">
    <location>
        <begin position="451"/>
        <end position="456"/>
    </location>
</feature>
<feature type="strand" evidence="5">
    <location>
        <begin position="460"/>
        <end position="468"/>
    </location>
</feature>
<feature type="helix" evidence="5">
    <location>
        <begin position="473"/>
        <end position="476"/>
    </location>
</feature>
<feature type="turn" evidence="5">
    <location>
        <begin position="477"/>
        <end position="479"/>
    </location>
</feature>
<feature type="helix" evidence="5">
    <location>
        <begin position="491"/>
        <end position="500"/>
    </location>
</feature>
<feature type="strand" evidence="5">
    <location>
        <begin position="508"/>
        <end position="512"/>
    </location>
</feature>
<feature type="helix" evidence="5">
    <location>
        <begin position="524"/>
        <end position="534"/>
    </location>
</feature>
<feature type="strand" evidence="5">
    <location>
        <begin position="539"/>
        <end position="548"/>
    </location>
</feature>
<feature type="strand" evidence="5">
    <location>
        <begin position="550"/>
        <end position="554"/>
    </location>
</feature>
<feature type="strand" evidence="5">
    <location>
        <begin position="557"/>
        <end position="559"/>
    </location>
</feature>
<feature type="turn" evidence="5">
    <location>
        <begin position="563"/>
        <end position="566"/>
    </location>
</feature>
<feature type="strand" evidence="5">
    <location>
        <begin position="573"/>
        <end position="576"/>
    </location>
</feature>
<proteinExistence type="evidence at protein level"/>
<organismHost>
    <name type="scientific">Homo sapiens</name>
    <name type="common">Human</name>
    <dbReference type="NCBI Taxonomy" id="9606"/>
</organismHost>
<organism>
    <name type="scientific">Epstein-Barr virus (strain AG876)</name>
    <name type="common">HHV-4</name>
    <name type="synonym">Human herpesvirus 4</name>
    <dbReference type="NCBI Taxonomy" id="82830"/>
    <lineage>
        <taxon>Viruses</taxon>
        <taxon>Duplodnaviria</taxon>
        <taxon>Heunggongvirae</taxon>
        <taxon>Peploviricota</taxon>
        <taxon>Herviviricetes</taxon>
        <taxon>Herpesvirales</taxon>
        <taxon>Orthoherpesviridae</taxon>
        <taxon>Gammaherpesvirinae</taxon>
        <taxon>Lymphocryptovirus</taxon>
        <taxon>Lymphocryptovirus humangamma4</taxon>
        <taxon>Epstein-Barr virus (strain GD1)</taxon>
    </lineage>
</organism>